<keyword id="KW-1185">Reference proteome</keyword>
<keyword id="KW-0687">Ribonucleoprotein</keyword>
<keyword id="KW-0689">Ribosomal protein</keyword>
<keyword id="KW-0694">RNA-binding</keyword>
<keyword id="KW-0699">rRNA-binding</keyword>
<keyword id="KW-0820">tRNA-binding</keyword>
<organism>
    <name type="scientific">Shigella boydii serotype 18 (strain CDC 3083-94 / BS512)</name>
    <dbReference type="NCBI Taxonomy" id="344609"/>
    <lineage>
        <taxon>Bacteria</taxon>
        <taxon>Pseudomonadati</taxon>
        <taxon>Pseudomonadota</taxon>
        <taxon>Gammaproteobacteria</taxon>
        <taxon>Enterobacterales</taxon>
        <taxon>Enterobacteriaceae</taxon>
        <taxon>Shigella</taxon>
    </lineage>
</organism>
<comment type="function">
    <text evidence="1">Binds 23S rRNA and is also seen to make contacts with the A and possibly P site tRNAs.</text>
</comment>
<comment type="subunit">
    <text evidence="1">Part of the 50S ribosomal subunit.</text>
</comment>
<comment type="similarity">
    <text evidence="1">Belongs to the universal ribosomal protein uL16 family.</text>
</comment>
<gene>
    <name evidence="1" type="primary">rplP</name>
    <name type="ordered locus">SbBS512_E3698</name>
</gene>
<reference key="1">
    <citation type="submission" date="2008-05" db="EMBL/GenBank/DDBJ databases">
        <title>Complete sequence of Shigella boydii serotype 18 strain BS512.</title>
        <authorList>
            <person name="Rasko D.A."/>
            <person name="Rosovitz M."/>
            <person name="Maurelli A.T."/>
            <person name="Myers G."/>
            <person name="Seshadri R."/>
            <person name="Cer R."/>
            <person name="Jiang L."/>
            <person name="Ravel J."/>
            <person name="Sebastian Y."/>
        </authorList>
    </citation>
    <scope>NUCLEOTIDE SEQUENCE [LARGE SCALE GENOMIC DNA]</scope>
    <source>
        <strain>CDC 3083-94 / BS512</strain>
    </source>
</reference>
<proteinExistence type="inferred from homology"/>
<accession>B2U2T1</accession>
<sequence>MLQPKRTKFRKMHKGRNRGLAQGTDVSFGSFGLKAVGRGRLTARQIEAARRAMTRAVKRQGKIWIRVFPDKPITEKPLAVRMGKGKGNVEYWVALIQPGKVLYEMDGVPEELAREAFKLAAAKLPIKTTFVTKTVM</sequence>
<feature type="chain" id="PRO_1000143030" description="Large ribosomal subunit protein uL16">
    <location>
        <begin position="1"/>
        <end position="136"/>
    </location>
</feature>
<evidence type="ECO:0000255" key="1">
    <source>
        <dbReference type="HAMAP-Rule" id="MF_01342"/>
    </source>
</evidence>
<evidence type="ECO:0000305" key="2"/>
<protein>
    <recommendedName>
        <fullName evidence="1">Large ribosomal subunit protein uL16</fullName>
    </recommendedName>
    <alternativeName>
        <fullName evidence="2">50S ribosomal protein L16</fullName>
    </alternativeName>
</protein>
<dbReference type="EMBL" id="CP001063">
    <property type="protein sequence ID" value="ACD08072.1"/>
    <property type="molecule type" value="Genomic_DNA"/>
</dbReference>
<dbReference type="RefSeq" id="WP_000941212.1">
    <property type="nucleotide sequence ID" value="NC_010658.1"/>
</dbReference>
<dbReference type="SMR" id="B2U2T1"/>
<dbReference type="STRING" id="344609.SbBS512_E3698"/>
<dbReference type="GeneID" id="93778674"/>
<dbReference type="KEGG" id="sbc:SbBS512_E3698"/>
<dbReference type="HOGENOM" id="CLU_078858_2_1_6"/>
<dbReference type="Proteomes" id="UP000001030">
    <property type="component" value="Chromosome"/>
</dbReference>
<dbReference type="GO" id="GO:0022625">
    <property type="term" value="C:cytosolic large ribosomal subunit"/>
    <property type="evidence" value="ECO:0007669"/>
    <property type="project" value="TreeGrafter"/>
</dbReference>
<dbReference type="GO" id="GO:0019843">
    <property type="term" value="F:rRNA binding"/>
    <property type="evidence" value="ECO:0007669"/>
    <property type="project" value="UniProtKB-UniRule"/>
</dbReference>
<dbReference type="GO" id="GO:0003735">
    <property type="term" value="F:structural constituent of ribosome"/>
    <property type="evidence" value="ECO:0007669"/>
    <property type="project" value="InterPro"/>
</dbReference>
<dbReference type="GO" id="GO:0000049">
    <property type="term" value="F:tRNA binding"/>
    <property type="evidence" value="ECO:0007669"/>
    <property type="project" value="UniProtKB-KW"/>
</dbReference>
<dbReference type="GO" id="GO:0006412">
    <property type="term" value="P:translation"/>
    <property type="evidence" value="ECO:0007669"/>
    <property type="project" value="UniProtKB-UniRule"/>
</dbReference>
<dbReference type="CDD" id="cd01433">
    <property type="entry name" value="Ribosomal_L16_L10e"/>
    <property type="match status" value="1"/>
</dbReference>
<dbReference type="FunFam" id="3.90.1170.10:FF:000001">
    <property type="entry name" value="50S ribosomal protein L16"/>
    <property type="match status" value="1"/>
</dbReference>
<dbReference type="Gene3D" id="3.90.1170.10">
    <property type="entry name" value="Ribosomal protein L10e/L16"/>
    <property type="match status" value="1"/>
</dbReference>
<dbReference type="HAMAP" id="MF_01342">
    <property type="entry name" value="Ribosomal_uL16"/>
    <property type="match status" value="1"/>
</dbReference>
<dbReference type="InterPro" id="IPR047873">
    <property type="entry name" value="Ribosomal_uL16"/>
</dbReference>
<dbReference type="InterPro" id="IPR000114">
    <property type="entry name" value="Ribosomal_uL16_bact-type"/>
</dbReference>
<dbReference type="InterPro" id="IPR020798">
    <property type="entry name" value="Ribosomal_uL16_CS"/>
</dbReference>
<dbReference type="InterPro" id="IPR016180">
    <property type="entry name" value="Ribosomal_uL16_dom"/>
</dbReference>
<dbReference type="InterPro" id="IPR036920">
    <property type="entry name" value="Ribosomal_uL16_sf"/>
</dbReference>
<dbReference type="NCBIfam" id="TIGR01164">
    <property type="entry name" value="rplP_bact"/>
    <property type="match status" value="1"/>
</dbReference>
<dbReference type="PANTHER" id="PTHR12220">
    <property type="entry name" value="50S/60S RIBOSOMAL PROTEIN L16"/>
    <property type="match status" value="1"/>
</dbReference>
<dbReference type="PANTHER" id="PTHR12220:SF13">
    <property type="entry name" value="LARGE RIBOSOMAL SUBUNIT PROTEIN UL16M"/>
    <property type="match status" value="1"/>
</dbReference>
<dbReference type="Pfam" id="PF00252">
    <property type="entry name" value="Ribosomal_L16"/>
    <property type="match status" value="1"/>
</dbReference>
<dbReference type="PRINTS" id="PR00060">
    <property type="entry name" value="RIBOSOMALL16"/>
</dbReference>
<dbReference type="SUPFAM" id="SSF54686">
    <property type="entry name" value="Ribosomal protein L16p/L10e"/>
    <property type="match status" value="1"/>
</dbReference>
<dbReference type="PROSITE" id="PS00586">
    <property type="entry name" value="RIBOSOMAL_L16_1"/>
    <property type="match status" value="1"/>
</dbReference>
<dbReference type="PROSITE" id="PS00701">
    <property type="entry name" value="RIBOSOMAL_L16_2"/>
    <property type="match status" value="1"/>
</dbReference>
<name>RL16_SHIB3</name>